<organism>
    <name type="scientific">Clostridium botulinum (strain Alaska E43 / Type E3)</name>
    <dbReference type="NCBI Taxonomy" id="508767"/>
    <lineage>
        <taxon>Bacteria</taxon>
        <taxon>Bacillati</taxon>
        <taxon>Bacillota</taxon>
        <taxon>Clostridia</taxon>
        <taxon>Eubacteriales</taxon>
        <taxon>Clostridiaceae</taxon>
        <taxon>Clostridium</taxon>
    </lineage>
</organism>
<proteinExistence type="inferred from homology"/>
<gene>
    <name evidence="1" type="primary">cysS</name>
    <name type="ordered locus">CLH_0216</name>
</gene>
<accession>B2UY90</accession>
<sequence length="470" mass="54394">MRIFNTLTRKKEEFIPITPGEVKMYVCGPTVYNFFHIGNGRTFIVFDTIRRYLEYRGYDVKFVQNFTDIDDKMIKKANEEGTTVKEIGDKYIKEYYEDADKLQIERATVNPRATEYIEDIIDFVAQLIEKGYAYEVEGDVYFNTKKFNDYGKLSGQSIEDLQMGASNRTSSVADERKKDPMDFAIWKSQKPGEPAWKCPWGMGRPGWHIECSCMAKKILGDTIDIHAGGMDLTFPHHENEVAQSEALTGVQFANYWMHSAYVNINNQKMSKSLNNFFTARDILKEYDSDVVRFFMMSAHYRLQINFSKDLLDSAKASVERLYNAIGNLENLIDEVSRENMNEEEVRYLNSLNKYREKYIEKMDDDFNTADALTVLFELTKDTNTNINVNSSKELVNKALDLIRELGAPLGLLQKITKGSLEDEIESLIQQRQDARKNKDFALSDKIRDDLKDRGIVLEDTPQGVRWKKIN</sequence>
<keyword id="KW-0030">Aminoacyl-tRNA synthetase</keyword>
<keyword id="KW-0067">ATP-binding</keyword>
<keyword id="KW-0963">Cytoplasm</keyword>
<keyword id="KW-0436">Ligase</keyword>
<keyword id="KW-0479">Metal-binding</keyword>
<keyword id="KW-0547">Nucleotide-binding</keyword>
<keyword id="KW-0648">Protein biosynthesis</keyword>
<keyword id="KW-0862">Zinc</keyword>
<feature type="chain" id="PRO_1000090825" description="Cysteine--tRNA ligase">
    <location>
        <begin position="1"/>
        <end position="470"/>
    </location>
</feature>
<feature type="short sequence motif" description="'HIGH' region">
    <location>
        <begin position="29"/>
        <end position="39"/>
    </location>
</feature>
<feature type="short sequence motif" description="'KMSKS' region">
    <location>
        <begin position="268"/>
        <end position="272"/>
    </location>
</feature>
<feature type="binding site" evidence="1">
    <location>
        <position position="27"/>
    </location>
    <ligand>
        <name>Zn(2+)</name>
        <dbReference type="ChEBI" id="CHEBI:29105"/>
    </ligand>
</feature>
<feature type="binding site" evidence="1">
    <location>
        <position position="211"/>
    </location>
    <ligand>
        <name>Zn(2+)</name>
        <dbReference type="ChEBI" id="CHEBI:29105"/>
    </ligand>
</feature>
<feature type="binding site" evidence="1">
    <location>
        <position position="236"/>
    </location>
    <ligand>
        <name>Zn(2+)</name>
        <dbReference type="ChEBI" id="CHEBI:29105"/>
    </ligand>
</feature>
<feature type="binding site" evidence="1">
    <location>
        <position position="240"/>
    </location>
    <ligand>
        <name>Zn(2+)</name>
        <dbReference type="ChEBI" id="CHEBI:29105"/>
    </ligand>
</feature>
<feature type="binding site" evidence="1">
    <location>
        <position position="271"/>
    </location>
    <ligand>
        <name>ATP</name>
        <dbReference type="ChEBI" id="CHEBI:30616"/>
    </ligand>
</feature>
<protein>
    <recommendedName>
        <fullName evidence="1">Cysteine--tRNA ligase</fullName>
        <ecNumber evidence="1">6.1.1.16</ecNumber>
    </recommendedName>
    <alternativeName>
        <fullName evidence="1">Cysteinyl-tRNA synthetase</fullName>
        <shortName evidence="1">CysRS</shortName>
    </alternativeName>
</protein>
<name>SYC_CLOBA</name>
<reference key="1">
    <citation type="submission" date="2008-05" db="EMBL/GenBank/DDBJ databases">
        <title>Complete genome sequence of Clostridium botulinum E3 str. Alaska E43.</title>
        <authorList>
            <person name="Brinkac L.M."/>
            <person name="Brown J.L."/>
            <person name="Bruce D."/>
            <person name="Detter C."/>
            <person name="Munk C."/>
            <person name="Smith L.A."/>
            <person name="Smith T.J."/>
            <person name="Sutton G."/>
            <person name="Brettin T.S."/>
        </authorList>
    </citation>
    <scope>NUCLEOTIDE SEQUENCE [LARGE SCALE GENOMIC DNA]</scope>
    <source>
        <strain>Alaska E43 / Type E3</strain>
    </source>
</reference>
<comment type="catalytic activity">
    <reaction evidence="1">
        <text>tRNA(Cys) + L-cysteine + ATP = L-cysteinyl-tRNA(Cys) + AMP + diphosphate</text>
        <dbReference type="Rhea" id="RHEA:17773"/>
        <dbReference type="Rhea" id="RHEA-COMP:9661"/>
        <dbReference type="Rhea" id="RHEA-COMP:9679"/>
        <dbReference type="ChEBI" id="CHEBI:30616"/>
        <dbReference type="ChEBI" id="CHEBI:33019"/>
        <dbReference type="ChEBI" id="CHEBI:35235"/>
        <dbReference type="ChEBI" id="CHEBI:78442"/>
        <dbReference type="ChEBI" id="CHEBI:78517"/>
        <dbReference type="ChEBI" id="CHEBI:456215"/>
        <dbReference type="EC" id="6.1.1.16"/>
    </reaction>
</comment>
<comment type="cofactor">
    <cofactor evidence="1">
        <name>Zn(2+)</name>
        <dbReference type="ChEBI" id="CHEBI:29105"/>
    </cofactor>
    <text evidence="1">Binds 1 zinc ion per subunit.</text>
</comment>
<comment type="subunit">
    <text evidence="1">Monomer.</text>
</comment>
<comment type="subcellular location">
    <subcellularLocation>
        <location evidence="1">Cytoplasm</location>
    </subcellularLocation>
</comment>
<comment type="similarity">
    <text evidence="1">Belongs to the class-I aminoacyl-tRNA synthetase family.</text>
</comment>
<dbReference type="EC" id="6.1.1.16" evidence="1"/>
<dbReference type="EMBL" id="CP001078">
    <property type="protein sequence ID" value="ACD54141.1"/>
    <property type="molecule type" value="Genomic_DNA"/>
</dbReference>
<dbReference type="RefSeq" id="WP_003371556.1">
    <property type="nucleotide sequence ID" value="NC_010723.1"/>
</dbReference>
<dbReference type="SMR" id="B2UY90"/>
<dbReference type="KEGG" id="cbt:CLH_0216"/>
<dbReference type="HOGENOM" id="CLU_013528_0_1_9"/>
<dbReference type="GO" id="GO:0005829">
    <property type="term" value="C:cytosol"/>
    <property type="evidence" value="ECO:0007669"/>
    <property type="project" value="TreeGrafter"/>
</dbReference>
<dbReference type="GO" id="GO:0005524">
    <property type="term" value="F:ATP binding"/>
    <property type="evidence" value="ECO:0007669"/>
    <property type="project" value="UniProtKB-UniRule"/>
</dbReference>
<dbReference type="GO" id="GO:0004817">
    <property type="term" value="F:cysteine-tRNA ligase activity"/>
    <property type="evidence" value="ECO:0007669"/>
    <property type="project" value="UniProtKB-UniRule"/>
</dbReference>
<dbReference type="GO" id="GO:0008270">
    <property type="term" value="F:zinc ion binding"/>
    <property type="evidence" value="ECO:0007669"/>
    <property type="project" value="UniProtKB-UniRule"/>
</dbReference>
<dbReference type="GO" id="GO:0006423">
    <property type="term" value="P:cysteinyl-tRNA aminoacylation"/>
    <property type="evidence" value="ECO:0007669"/>
    <property type="project" value="UniProtKB-UniRule"/>
</dbReference>
<dbReference type="CDD" id="cd07963">
    <property type="entry name" value="Anticodon_Ia_Cys"/>
    <property type="match status" value="1"/>
</dbReference>
<dbReference type="CDD" id="cd00672">
    <property type="entry name" value="CysRS_core"/>
    <property type="match status" value="1"/>
</dbReference>
<dbReference type="FunFam" id="3.40.50.620:FF:000009">
    <property type="entry name" value="Cysteine--tRNA ligase"/>
    <property type="match status" value="1"/>
</dbReference>
<dbReference type="Gene3D" id="1.20.120.1910">
    <property type="entry name" value="Cysteine-tRNA ligase, C-terminal anti-codon recognition domain"/>
    <property type="match status" value="1"/>
</dbReference>
<dbReference type="Gene3D" id="3.40.50.620">
    <property type="entry name" value="HUPs"/>
    <property type="match status" value="1"/>
</dbReference>
<dbReference type="HAMAP" id="MF_00041">
    <property type="entry name" value="Cys_tRNA_synth"/>
    <property type="match status" value="1"/>
</dbReference>
<dbReference type="InterPro" id="IPR015803">
    <property type="entry name" value="Cys-tRNA-ligase"/>
</dbReference>
<dbReference type="InterPro" id="IPR015273">
    <property type="entry name" value="Cys-tRNA-synt_Ia_DALR"/>
</dbReference>
<dbReference type="InterPro" id="IPR024909">
    <property type="entry name" value="Cys-tRNA/MSH_ligase"/>
</dbReference>
<dbReference type="InterPro" id="IPR056411">
    <property type="entry name" value="CysS_C"/>
</dbReference>
<dbReference type="InterPro" id="IPR014729">
    <property type="entry name" value="Rossmann-like_a/b/a_fold"/>
</dbReference>
<dbReference type="InterPro" id="IPR032678">
    <property type="entry name" value="tRNA-synt_1_cat_dom"/>
</dbReference>
<dbReference type="InterPro" id="IPR009080">
    <property type="entry name" value="tRNAsynth_Ia_anticodon-bd"/>
</dbReference>
<dbReference type="NCBIfam" id="TIGR00435">
    <property type="entry name" value="cysS"/>
    <property type="match status" value="1"/>
</dbReference>
<dbReference type="PANTHER" id="PTHR10890:SF3">
    <property type="entry name" value="CYSTEINE--TRNA LIGASE, CYTOPLASMIC"/>
    <property type="match status" value="1"/>
</dbReference>
<dbReference type="PANTHER" id="PTHR10890">
    <property type="entry name" value="CYSTEINYL-TRNA SYNTHETASE"/>
    <property type="match status" value="1"/>
</dbReference>
<dbReference type="Pfam" id="PF23493">
    <property type="entry name" value="CysS_C"/>
    <property type="match status" value="1"/>
</dbReference>
<dbReference type="Pfam" id="PF09190">
    <property type="entry name" value="DALR_2"/>
    <property type="match status" value="1"/>
</dbReference>
<dbReference type="Pfam" id="PF01406">
    <property type="entry name" value="tRNA-synt_1e"/>
    <property type="match status" value="1"/>
</dbReference>
<dbReference type="PRINTS" id="PR00983">
    <property type="entry name" value="TRNASYNTHCYS"/>
</dbReference>
<dbReference type="SMART" id="SM00840">
    <property type="entry name" value="DALR_2"/>
    <property type="match status" value="1"/>
</dbReference>
<dbReference type="SUPFAM" id="SSF47323">
    <property type="entry name" value="Anticodon-binding domain of a subclass of class I aminoacyl-tRNA synthetases"/>
    <property type="match status" value="1"/>
</dbReference>
<dbReference type="SUPFAM" id="SSF52374">
    <property type="entry name" value="Nucleotidylyl transferase"/>
    <property type="match status" value="1"/>
</dbReference>
<evidence type="ECO:0000255" key="1">
    <source>
        <dbReference type="HAMAP-Rule" id="MF_00041"/>
    </source>
</evidence>